<proteinExistence type="evidence at protein level"/>
<name>SL9C2_HUMAN</name>
<feature type="chain" id="PRO_0000295706" description="Sodium/hydrogen exchanger 11">
    <location>
        <begin position="1"/>
        <end position="1124"/>
    </location>
</feature>
<feature type="transmembrane region" description="Helical" evidence="2">
    <location>
        <begin position="25"/>
        <end position="45"/>
    </location>
</feature>
<feature type="transmembrane region" description="Helical" evidence="2">
    <location>
        <begin position="52"/>
        <end position="72"/>
    </location>
</feature>
<feature type="transmembrane region" description="Helical" evidence="2">
    <location>
        <begin position="90"/>
        <end position="110"/>
    </location>
</feature>
<feature type="transmembrane region" description="Helical" evidence="2">
    <location>
        <begin position="120"/>
        <end position="140"/>
    </location>
</feature>
<feature type="transmembrane region" description="Helical" evidence="2">
    <location>
        <begin position="179"/>
        <end position="199"/>
    </location>
</feature>
<feature type="transmembrane region" description="Helical" evidence="2">
    <location>
        <begin position="224"/>
        <end position="244"/>
    </location>
</feature>
<feature type="transmembrane region" description="Helical" evidence="2">
    <location>
        <begin position="254"/>
        <end position="274"/>
    </location>
</feature>
<feature type="transmembrane region" description="Helical" evidence="2">
    <location>
        <begin position="305"/>
        <end position="325"/>
    </location>
</feature>
<feature type="transmembrane region" description="Helical" evidence="2">
    <location>
        <begin position="335"/>
        <end position="355"/>
    </location>
</feature>
<feature type="transmembrane region" description="Helical" evidence="2">
    <location>
        <begin position="372"/>
        <end position="392"/>
    </location>
</feature>
<feature type="transmembrane region" description="Helical" evidence="2">
    <location>
        <begin position="405"/>
        <end position="425"/>
    </location>
</feature>
<feature type="transmembrane region" description="Helical" evidence="2">
    <location>
        <begin position="612"/>
        <end position="632"/>
    </location>
</feature>
<feature type="transmembrane region" description="Helical" evidence="2">
    <location>
        <begin position="641"/>
        <end position="661"/>
    </location>
</feature>
<feature type="transmembrane region" description="Helical" evidence="2">
    <location>
        <begin position="674"/>
        <end position="694"/>
    </location>
</feature>
<feature type="transmembrane region" description="Helical" evidence="2">
    <location>
        <begin position="706"/>
        <end position="726"/>
    </location>
</feature>
<feature type="region of interest" description="Ion transport-like" evidence="1">
    <location>
        <begin position="642"/>
        <end position="723"/>
    </location>
</feature>
<feature type="binding site">
    <location>
        <begin position="867"/>
        <end position="999"/>
    </location>
    <ligand>
        <name>a nucleoside 3',5'-cyclic phosphate</name>
        <dbReference type="ChEBI" id="CHEBI:58464"/>
    </ligand>
</feature>
<feature type="glycosylation site" description="N-linked (GlcNAc...) asparagine" evidence="2">
    <location>
        <position position="447"/>
    </location>
</feature>
<feature type="glycosylation site" description="N-linked (GlcNAc...) asparagine" evidence="2">
    <location>
        <position position="473"/>
    </location>
</feature>
<feature type="sequence variant" id="VAR_033331" description="In dbSNP:rs7551131.">
    <original>T</original>
    <variation>M</variation>
    <location>
        <position position="481"/>
    </location>
</feature>
<feature type="sequence variant" id="VAR_033332" description="In dbSNP:rs16846206.">
    <original>A</original>
    <variation>G</variation>
    <location>
        <position position="505"/>
    </location>
</feature>
<feature type="sequence variant" id="VAR_033333" description="In dbSNP:rs17854214." evidence="3">
    <original>R</original>
    <variation>S</variation>
    <location>
        <position position="934"/>
    </location>
</feature>
<dbReference type="EMBL" id="AL139142">
    <property type="status" value="NOT_ANNOTATED_CDS"/>
    <property type="molecule type" value="Genomic_DNA"/>
</dbReference>
<dbReference type="EMBL" id="BC042592">
    <property type="protein sequence ID" value="AAH42592.1"/>
    <property type="molecule type" value="mRNA"/>
</dbReference>
<dbReference type="CCDS" id="CCDS1308.1"/>
<dbReference type="RefSeq" id="NP_848622.2">
    <property type="nucleotide sequence ID" value="NM_178527.4"/>
</dbReference>
<dbReference type="SMR" id="Q5TAH2"/>
<dbReference type="FunCoup" id="Q5TAH2">
    <property type="interactions" value="151"/>
</dbReference>
<dbReference type="STRING" id="9606.ENSP00000356687"/>
<dbReference type="TCDB" id="2.A.36.7.4">
    <property type="family name" value="the monovalent cation:proton antiporter-1 (cpa1) family"/>
</dbReference>
<dbReference type="GlyCosmos" id="Q5TAH2">
    <property type="glycosylation" value="2 sites, No reported glycans"/>
</dbReference>
<dbReference type="GlyGen" id="Q5TAH2">
    <property type="glycosylation" value="4 sites, 1 N-linked glycan (1 site)"/>
</dbReference>
<dbReference type="iPTMnet" id="Q5TAH2"/>
<dbReference type="PhosphoSitePlus" id="Q5TAH2"/>
<dbReference type="BioMuta" id="SLC9C2"/>
<dbReference type="DMDM" id="74745831"/>
<dbReference type="jPOST" id="Q5TAH2"/>
<dbReference type="MassIVE" id="Q5TAH2"/>
<dbReference type="PaxDb" id="9606-ENSP00000356687"/>
<dbReference type="PeptideAtlas" id="Q5TAH2"/>
<dbReference type="ProteomicsDB" id="64851"/>
<dbReference type="Antibodypedia" id="47078">
    <property type="antibodies" value="23 antibodies from 13 providers"/>
</dbReference>
<dbReference type="DNASU" id="284525"/>
<dbReference type="Ensembl" id="ENST00000367714.4">
    <property type="protein sequence ID" value="ENSP00000356687.3"/>
    <property type="gene ID" value="ENSG00000162753.13"/>
</dbReference>
<dbReference type="GeneID" id="284525"/>
<dbReference type="KEGG" id="hsa:284525"/>
<dbReference type="MANE-Select" id="ENST00000367714.4">
    <property type="protein sequence ID" value="ENSP00000356687.3"/>
    <property type="RefSeq nucleotide sequence ID" value="NM_178527.4"/>
    <property type="RefSeq protein sequence ID" value="NP_848622.2"/>
</dbReference>
<dbReference type="UCSC" id="uc001giz.3">
    <property type="organism name" value="human"/>
</dbReference>
<dbReference type="AGR" id="HGNC:28664"/>
<dbReference type="CTD" id="284525"/>
<dbReference type="DisGeNET" id="284525"/>
<dbReference type="GeneCards" id="SLC9C2"/>
<dbReference type="HGNC" id="HGNC:28664">
    <property type="gene designation" value="SLC9C2"/>
</dbReference>
<dbReference type="HPA" id="ENSG00000162753">
    <property type="expression patterns" value="Tissue enriched (testis)"/>
</dbReference>
<dbReference type="MIM" id="620338">
    <property type="type" value="gene"/>
</dbReference>
<dbReference type="neXtProt" id="NX_Q5TAH2"/>
<dbReference type="OpenTargets" id="ENSG00000162753"/>
<dbReference type="PharmGKB" id="PA134865165"/>
<dbReference type="VEuPathDB" id="HostDB:ENSG00000162753"/>
<dbReference type="eggNOG" id="KOG0100">
    <property type="taxonomic scope" value="Eukaryota"/>
</dbReference>
<dbReference type="GeneTree" id="ENSGT00940000162785"/>
<dbReference type="HOGENOM" id="CLU_003400_0_0_1"/>
<dbReference type="InParanoid" id="Q5TAH2"/>
<dbReference type="OMA" id="GYWCARI"/>
<dbReference type="OrthoDB" id="441412at2759"/>
<dbReference type="PAN-GO" id="Q5TAH2">
    <property type="GO annotations" value="6 GO annotations based on evolutionary models"/>
</dbReference>
<dbReference type="PhylomeDB" id="Q5TAH2"/>
<dbReference type="TreeFam" id="TF328865"/>
<dbReference type="PathwayCommons" id="Q5TAH2"/>
<dbReference type="Reactome" id="R-HSA-2672351">
    <property type="pathway name" value="Stimuli-sensing channels"/>
</dbReference>
<dbReference type="BioGRID-ORCS" id="284525">
    <property type="hits" value="10 hits in 1142 CRISPR screens"/>
</dbReference>
<dbReference type="ChiTaRS" id="SLC9C2">
    <property type="organism name" value="human"/>
</dbReference>
<dbReference type="GeneWiki" id="SLC9A11"/>
<dbReference type="GenomeRNAi" id="284525"/>
<dbReference type="Pharos" id="Q5TAH2">
    <property type="development level" value="Tdark"/>
</dbReference>
<dbReference type="PRO" id="PR:Q5TAH2"/>
<dbReference type="Proteomes" id="UP000005640">
    <property type="component" value="Chromosome 1"/>
</dbReference>
<dbReference type="RNAct" id="Q5TAH2">
    <property type="molecule type" value="protein"/>
</dbReference>
<dbReference type="Bgee" id="ENSG00000162753">
    <property type="expression patterns" value="Expressed in right uterine tube and 104 other cell types or tissues"/>
</dbReference>
<dbReference type="GO" id="GO:0005886">
    <property type="term" value="C:plasma membrane"/>
    <property type="evidence" value="ECO:0000318"/>
    <property type="project" value="GO_Central"/>
</dbReference>
<dbReference type="GO" id="GO:0015386">
    <property type="term" value="F:potassium:proton antiporter activity"/>
    <property type="evidence" value="ECO:0000318"/>
    <property type="project" value="GO_Central"/>
</dbReference>
<dbReference type="GO" id="GO:0015385">
    <property type="term" value="F:sodium:proton antiporter activity"/>
    <property type="evidence" value="ECO:0000318"/>
    <property type="project" value="GO_Central"/>
</dbReference>
<dbReference type="GO" id="GO:0071805">
    <property type="term" value="P:potassium ion transmembrane transport"/>
    <property type="evidence" value="ECO:0000318"/>
    <property type="project" value="GO_Central"/>
</dbReference>
<dbReference type="GO" id="GO:0051453">
    <property type="term" value="P:regulation of intracellular pH"/>
    <property type="evidence" value="ECO:0000318"/>
    <property type="project" value="GO_Central"/>
</dbReference>
<dbReference type="GO" id="GO:0098719">
    <property type="term" value="P:sodium ion import across plasma membrane"/>
    <property type="evidence" value="ECO:0000318"/>
    <property type="project" value="GO_Central"/>
</dbReference>
<dbReference type="CDD" id="cd00038">
    <property type="entry name" value="CAP_ED"/>
    <property type="match status" value="1"/>
</dbReference>
<dbReference type="FunFam" id="1.20.120.350:FF:000050">
    <property type="entry name" value="Solute carrier family 9 member C1"/>
    <property type="match status" value="1"/>
</dbReference>
<dbReference type="FunFam" id="2.60.120.10:FF:000142">
    <property type="entry name" value="Solute carrier family 9 member C2 (putative)"/>
    <property type="match status" value="1"/>
</dbReference>
<dbReference type="Gene3D" id="2.60.120.10">
    <property type="entry name" value="Jelly Rolls"/>
    <property type="match status" value="1"/>
</dbReference>
<dbReference type="Gene3D" id="1.20.120.350">
    <property type="entry name" value="Voltage-gated potassium channels. Chain C"/>
    <property type="match status" value="1"/>
</dbReference>
<dbReference type="InterPro" id="IPR018422">
    <property type="entry name" value="Cation/H_exchanger_CPA1"/>
</dbReference>
<dbReference type="InterPro" id="IPR006153">
    <property type="entry name" value="Cation/H_exchanger_TM"/>
</dbReference>
<dbReference type="InterPro" id="IPR000595">
    <property type="entry name" value="cNMP-bd_dom"/>
</dbReference>
<dbReference type="InterPro" id="IPR018490">
    <property type="entry name" value="cNMP-bd_dom_sf"/>
</dbReference>
<dbReference type="InterPro" id="IPR014710">
    <property type="entry name" value="RmlC-like_jellyroll"/>
</dbReference>
<dbReference type="InterPro" id="IPR027359">
    <property type="entry name" value="Volt_channel_dom_sf"/>
</dbReference>
<dbReference type="PANTHER" id="PTHR10110">
    <property type="entry name" value="SODIUM/HYDROGEN EXCHANGER"/>
    <property type="match status" value="1"/>
</dbReference>
<dbReference type="PANTHER" id="PTHR10110:SF91">
    <property type="entry name" value="SODIUM_HYDROGEN EXCHANGER 11"/>
    <property type="match status" value="1"/>
</dbReference>
<dbReference type="Pfam" id="PF00027">
    <property type="entry name" value="cNMP_binding"/>
    <property type="match status" value="1"/>
</dbReference>
<dbReference type="Pfam" id="PF00999">
    <property type="entry name" value="Na_H_Exchanger"/>
    <property type="match status" value="1"/>
</dbReference>
<dbReference type="SUPFAM" id="SSF51206">
    <property type="entry name" value="cAMP-binding domain-like"/>
    <property type="match status" value="1"/>
</dbReference>
<dbReference type="PROSITE" id="PS50042">
    <property type="entry name" value="CNMP_BINDING_3"/>
    <property type="match status" value="1"/>
</dbReference>
<comment type="function">
    <text evidence="1">Involved in pH regulation.</text>
</comment>
<comment type="subcellular location">
    <subcellularLocation>
        <location>Membrane</location>
        <topology>Multi-pass membrane protein</topology>
    </subcellularLocation>
</comment>
<comment type="domain">
    <text evidence="1">Contains an ion transport-like region is related to the membrane segments of voltage-gated ion channels.</text>
</comment>
<comment type="similarity">
    <text evidence="4">Belongs to the monovalent cation:proton antiporter 1 (CPA1) transporter (TC 2.A.36) family.</text>
</comment>
<keyword id="KW-0050">Antiport</keyword>
<keyword id="KW-0325">Glycoprotein</keyword>
<keyword id="KW-0406">Ion transport</keyword>
<keyword id="KW-0472">Membrane</keyword>
<keyword id="KW-1267">Proteomics identification</keyword>
<keyword id="KW-1185">Reference proteome</keyword>
<keyword id="KW-0915">Sodium</keyword>
<keyword id="KW-0739">Sodium transport</keyword>
<keyword id="KW-0812">Transmembrane</keyword>
<keyword id="KW-1133">Transmembrane helix</keyword>
<keyword id="KW-0813">Transport</keyword>
<gene>
    <name type="primary">SLC9C2</name>
    <name type="synonym">SLC9A11</name>
</gene>
<evidence type="ECO:0000250" key="1"/>
<evidence type="ECO:0000255" key="2"/>
<evidence type="ECO:0000269" key="3">
    <source>
    </source>
</evidence>
<evidence type="ECO:0000305" key="4"/>
<organism>
    <name type="scientific">Homo sapiens</name>
    <name type="common">Human</name>
    <dbReference type="NCBI Taxonomy" id="9606"/>
    <lineage>
        <taxon>Eukaryota</taxon>
        <taxon>Metazoa</taxon>
        <taxon>Chordata</taxon>
        <taxon>Craniata</taxon>
        <taxon>Vertebrata</taxon>
        <taxon>Euteleostomi</taxon>
        <taxon>Mammalia</taxon>
        <taxon>Eutheria</taxon>
        <taxon>Euarchontoglires</taxon>
        <taxon>Primates</taxon>
        <taxon>Haplorrhini</taxon>
        <taxon>Catarrhini</taxon>
        <taxon>Hominidae</taxon>
        <taxon>Homo</taxon>
    </lineage>
</organism>
<sequence length="1124" mass="129053">MSSYFWAQNESNRPDLLCGQPADYLVEEKHFTTLVCFIVVLGGLLKMCLKNCEVIVLTILSLSGFVIGHMAYNSVEVHQIVYPLLRTSSFSLYSYFSPLIIFMVALDVEFYTLKKMFWQVLLTGLISFSTASIIIGYVVIKFNKDSWDLQSCLLFSITLGIIDPLRSVNSLKTIGISKIYIDLIRGESLIICSIASIFFGNFRGNRIHFSIFRDLHVGIELSYDILGSIIFGYWCAKIIQCILADVFSNMLTNIILCFSMVYMTFYIVEFLGMSGTLALAAVGLNLDSLTFKPKIELVITKFLRIFSSVYEHLIYAFFGIVIGCGELSHYEFHTIPFIFILFTTVNLVRLLTILLVSPILMHSNYEYNWRWGVVITWSGIKGVFNLLWAPDVYNLAERKVEVPQMFILYVQVISLLTMGINSYVMTQSARKLDLCVLSLPRQMILQNATQHIQEIVQNTITLFKTEKILTNVNWTLVEDKTRIEYIPFSHVSHNDMKTESTTDEALMEEARLHVAAIQMSSFEKQRNNGILEIEAARILIGAAKCYYSIQGKFMSIYDVSTYMRTRSWLIKFKNVLTFLEYCIEKIHFIPPESNTFLTFIFHIVFSEEFEYTGQIINLIYIYPMIIHLWPMARGLNVSALISINYYFMFLYVLESTLKIIILKRKYFQQCWNTLEFFILVIGIIDIFCVYFVKLRPDNLALIQLTVIMGYLRIIRFLPLFKIIVPILIRIADVQIKKRLSLMYSITKGYIKSQEDAKLLIKQIAVCESIYQKLCEILETNKQDAVKELVLMEHEGRDVVIALKTKQAIRNVIAKALKNLTFLCSRGIIDKHEVIEINKVLLKKLKALNNFPKAIPPPTPDIYLHNIIWLEGKDVLIDFFKERAKLACFDSGDTICKGGEMPQGIYLIISGMAILHSLSPTFGIESNQRCDRGSRDMFTEFCTTGDIIGELSCLLKREIEYTVICETSLQACFISLEDLYEGFDAFWPSLEYKIWLKLALSTAYQYFESSLIDEDLRFQNCVMFNQAYVETLSSYSDMIIDNMTMKFVIIVYGSVIDTKTEEPYFAPCIIPTTCEQVQGTSDLSKLLIIQASELTQRNSNTNVMASVNTVFEQPGKNINGRQKMS</sequence>
<accession>Q5TAH2</accession>
<accession>Q86UF3</accession>
<reference key="1">
    <citation type="journal article" date="2006" name="Nature">
        <title>The DNA sequence and biological annotation of human chromosome 1.</title>
        <authorList>
            <person name="Gregory S.G."/>
            <person name="Barlow K.F."/>
            <person name="McLay K.E."/>
            <person name="Kaul R."/>
            <person name="Swarbreck D."/>
            <person name="Dunham A."/>
            <person name="Scott C.E."/>
            <person name="Howe K.L."/>
            <person name="Woodfine K."/>
            <person name="Spencer C.C.A."/>
            <person name="Jones M.C."/>
            <person name="Gillson C."/>
            <person name="Searle S."/>
            <person name="Zhou Y."/>
            <person name="Kokocinski F."/>
            <person name="McDonald L."/>
            <person name="Evans R."/>
            <person name="Phillips K."/>
            <person name="Atkinson A."/>
            <person name="Cooper R."/>
            <person name="Jones C."/>
            <person name="Hall R.E."/>
            <person name="Andrews T.D."/>
            <person name="Lloyd C."/>
            <person name="Ainscough R."/>
            <person name="Almeida J.P."/>
            <person name="Ambrose K.D."/>
            <person name="Anderson F."/>
            <person name="Andrew R.W."/>
            <person name="Ashwell R.I.S."/>
            <person name="Aubin K."/>
            <person name="Babbage A.K."/>
            <person name="Bagguley C.L."/>
            <person name="Bailey J."/>
            <person name="Beasley H."/>
            <person name="Bethel G."/>
            <person name="Bird C.P."/>
            <person name="Bray-Allen S."/>
            <person name="Brown J.Y."/>
            <person name="Brown A.J."/>
            <person name="Buckley D."/>
            <person name="Burton J."/>
            <person name="Bye J."/>
            <person name="Carder C."/>
            <person name="Chapman J.C."/>
            <person name="Clark S.Y."/>
            <person name="Clarke G."/>
            <person name="Clee C."/>
            <person name="Cobley V."/>
            <person name="Collier R.E."/>
            <person name="Corby N."/>
            <person name="Coville G.J."/>
            <person name="Davies J."/>
            <person name="Deadman R."/>
            <person name="Dunn M."/>
            <person name="Earthrowl M."/>
            <person name="Ellington A.G."/>
            <person name="Errington H."/>
            <person name="Frankish A."/>
            <person name="Frankland J."/>
            <person name="French L."/>
            <person name="Garner P."/>
            <person name="Garnett J."/>
            <person name="Gay L."/>
            <person name="Ghori M.R.J."/>
            <person name="Gibson R."/>
            <person name="Gilby L.M."/>
            <person name="Gillett W."/>
            <person name="Glithero R.J."/>
            <person name="Grafham D.V."/>
            <person name="Griffiths C."/>
            <person name="Griffiths-Jones S."/>
            <person name="Grocock R."/>
            <person name="Hammond S."/>
            <person name="Harrison E.S.I."/>
            <person name="Hart E."/>
            <person name="Haugen E."/>
            <person name="Heath P.D."/>
            <person name="Holmes S."/>
            <person name="Holt K."/>
            <person name="Howden P.J."/>
            <person name="Hunt A.R."/>
            <person name="Hunt S.E."/>
            <person name="Hunter G."/>
            <person name="Isherwood J."/>
            <person name="James R."/>
            <person name="Johnson C."/>
            <person name="Johnson D."/>
            <person name="Joy A."/>
            <person name="Kay M."/>
            <person name="Kershaw J.K."/>
            <person name="Kibukawa M."/>
            <person name="Kimberley A.M."/>
            <person name="King A."/>
            <person name="Knights A.J."/>
            <person name="Lad H."/>
            <person name="Laird G."/>
            <person name="Lawlor S."/>
            <person name="Leongamornlert D.A."/>
            <person name="Lloyd D.M."/>
            <person name="Loveland J."/>
            <person name="Lovell J."/>
            <person name="Lush M.J."/>
            <person name="Lyne R."/>
            <person name="Martin S."/>
            <person name="Mashreghi-Mohammadi M."/>
            <person name="Matthews L."/>
            <person name="Matthews N.S.W."/>
            <person name="McLaren S."/>
            <person name="Milne S."/>
            <person name="Mistry S."/>
            <person name="Moore M.J.F."/>
            <person name="Nickerson T."/>
            <person name="O'Dell C.N."/>
            <person name="Oliver K."/>
            <person name="Palmeiri A."/>
            <person name="Palmer S.A."/>
            <person name="Parker A."/>
            <person name="Patel D."/>
            <person name="Pearce A.V."/>
            <person name="Peck A.I."/>
            <person name="Pelan S."/>
            <person name="Phelps K."/>
            <person name="Phillimore B.J."/>
            <person name="Plumb R."/>
            <person name="Rajan J."/>
            <person name="Raymond C."/>
            <person name="Rouse G."/>
            <person name="Saenphimmachak C."/>
            <person name="Sehra H.K."/>
            <person name="Sheridan E."/>
            <person name="Shownkeen R."/>
            <person name="Sims S."/>
            <person name="Skuce C.D."/>
            <person name="Smith M."/>
            <person name="Steward C."/>
            <person name="Subramanian S."/>
            <person name="Sycamore N."/>
            <person name="Tracey A."/>
            <person name="Tromans A."/>
            <person name="Van Helmond Z."/>
            <person name="Wall M."/>
            <person name="Wallis J.M."/>
            <person name="White S."/>
            <person name="Whitehead S.L."/>
            <person name="Wilkinson J.E."/>
            <person name="Willey D.L."/>
            <person name="Williams H."/>
            <person name="Wilming L."/>
            <person name="Wray P.W."/>
            <person name="Wu Z."/>
            <person name="Coulson A."/>
            <person name="Vaudin M."/>
            <person name="Sulston J.E."/>
            <person name="Durbin R.M."/>
            <person name="Hubbard T."/>
            <person name="Wooster R."/>
            <person name="Dunham I."/>
            <person name="Carter N.P."/>
            <person name="McVean G."/>
            <person name="Ross M.T."/>
            <person name="Harrow J."/>
            <person name="Olson M.V."/>
            <person name="Beck S."/>
            <person name="Rogers J."/>
            <person name="Bentley D.R."/>
        </authorList>
    </citation>
    <scope>NUCLEOTIDE SEQUENCE [LARGE SCALE GENOMIC DNA]</scope>
</reference>
<reference key="2">
    <citation type="journal article" date="2004" name="Genome Res.">
        <title>The status, quality, and expansion of the NIH full-length cDNA project: the Mammalian Gene Collection (MGC).</title>
        <authorList>
            <consortium name="The MGC Project Team"/>
        </authorList>
    </citation>
    <scope>NUCLEOTIDE SEQUENCE [LARGE SCALE MRNA]</scope>
    <scope>VARIANT SER-934</scope>
    <source>
        <tissue>Testis</tissue>
    </source>
</reference>
<protein>
    <recommendedName>
        <fullName>Sodium/hydrogen exchanger 11</fullName>
    </recommendedName>
    <alternativeName>
        <fullName>Na(+)/H(+) exchanger 11</fullName>
        <shortName>NHE-11</shortName>
    </alternativeName>
    <alternativeName>
        <fullName>Solute carrier family 9 member 11</fullName>
    </alternativeName>
    <alternativeName>
        <fullName>Solute carrier family 9 member C2</fullName>
    </alternativeName>
</protein>